<comment type="function">
    <text evidence="1">One of the primary rRNA binding proteins, it binds specifically to the 5'-end of 16S ribosomal RNA.</text>
</comment>
<comment type="subunit">
    <text evidence="1">Part of the 30S ribosomal subunit.</text>
</comment>
<comment type="similarity">
    <text evidence="1">Belongs to the universal ribosomal protein uS17 family.</text>
</comment>
<feature type="chain" id="PRO_0000233547" description="Small ribosomal subunit protein uS17">
    <location>
        <begin position="1"/>
        <end position="88"/>
    </location>
</feature>
<accession>Q4ZMQ3</accession>
<keyword id="KW-0687">Ribonucleoprotein</keyword>
<keyword id="KW-0689">Ribosomal protein</keyword>
<keyword id="KW-0694">RNA-binding</keyword>
<keyword id="KW-0699">rRNA-binding</keyword>
<gene>
    <name evidence="1" type="primary">rpsQ</name>
    <name type="ordered locus">Psyr_4539</name>
</gene>
<dbReference type="EMBL" id="CP000075">
    <property type="protein sequence ID" value="AAY39569.1"/>
    <property type="molecule type" value="Genomic_DNA"/>
</dbReference>
<dbReference type="RefSeq" id="WP_002555480.1">
    <property type="nucleotide sequence ID" value="NC_007005.1"/>
</dbReference>
<dbReference type="RefSeq" id="YP_237607.1">
    <property type="nucleotide sequence ID" value="NC_007005.1"/>
</dbReference>
<dbReference type="SMR" id="Q4ZMQ3"/>
<dbReference type="STRING" id="205918.Psyr_4539"/>
<dbReference type="GeneID" id="96221021"/>
<dbReference type="KEGG" id="psb:Psyr_4539"/>
<dbReference type="PATRIC" id="fig|205918.7.peg.4678"/>
<dbReference type="eggNOG" id="COG0186">
    <property type="taxonomic scope" value="Bacteria"/>
</dbReference>
<dbReference type="HOGENOM" id="CLU_073626_1_1_6"/>
<dbReference type="OrthoDB" id="9811714at2"/>
<dbReference type="Proteomes" id="UP000000426">
    <property type="component" value="Chromosome"/>
</dbReference>
<dbReference type="GO" id="GO:0022627">
    <property type="term" value="C:cytosolic small ribosomal subunit"/>
    <property type="evidence" value="ECO:0007669"/>
    <property type="project" value="TreeGrafter"/>
</dbReference>
<dbReference type="GO" id="GO:0019843">
    <property type="term" value="F:rRNA binding"/>
    <property type="evidence" value="ECO:0007669"/>
    <property type="project" value="UniProtKB-UniRule"/>
</dbReference>
<dbReference type="GO" id="GO:0003735">
    <property type="term" value="F:structural constituent of ribosome"/>
    <property type="evidence" value="ECO:0007669"/>
    <property type="project" value="InterPro"/>
</dbReference>
<dbReference type="GO" id="GO:0006412">
    <property type="term" value="P:translation"/>
    <property type="evidence" value="ECO:0007669"/>
    <property type="project" value="UniProtKB-UniRule"/>
</dbReference>
<dbReference type="CDD" id="cd00364">
    <property type="entry name" value="Ribosomal_uS17"/>
    <property type="match status" value="1"/>
</dbReference>
<dbReference type="FunFam" id="2.40.50.140:FF:000014">
    <property type="entry name" value="30S ribosomal protein S17"/>
    <property type="match status" value="1"/>
</dbReference>
<dbReference type="Gene3D" id="2.40.50.140">
    <property type="entry name" value="Nucleic acid-binding proteins"/>
    <property type="match status" value="1"/>
</dbReference>
<dbReference type="HAMAP" id="MF_01345_B">
    <property type="entry name" value="Ribosomal_uS17_B"/>
    <property type="match status" value="1"/>
</dbReference>
<dbReference type="InterPro" id="IPR012340">
    <property type="entry name" value="NA-bd_OB-fold"/>
</dbReference>
<dbReference type="InterPro" id="IPR000266">
    <property type="entry name" value="Ribosomal_uS17"/>
</dbReference>
<dbReference type="InterPro" id="IPR019984">
    <property type="entry name" value="Ribosomal_uS17_bact/chlr"/>
</dbReference>
<dbReference type="NCBIfam" id="NF004123">
    <property type="entry name" value="PRK05610.1"/>
    <property type="match status" value="1"/>
</dbReference>
<dbReference type="NCBIfam" id="TIGR03635">
    <property type="entry name" value="uS17_bact"/>
    <property type="match status" value="1"/>
</dbReference>
<dbReference type="PANTHER" id="PTHR10744">
    <property type="entry name" value="40S RIBOSOMAL PROTEIN S11 FAMILY MEMBER"/>
    <property type="match status" value="1"/>
</dbReference>
<dbReference type="PANTHER" id="PTHR10744:SF1">
    <property type="entry name" value="SMALL RIBOSOMAL SUBUNIT PROTEIN US17M"/>
    <property type="match status" value="1"/>
</dbReference>
<dbReference type="Pfam" id="PF00366">
    <property type="entry name" value="Ribosomal_S17"/>
    <property type="match status" value="1"/>
</dbReference>
<dbReference type="PRINTS" id="PR00973">
    <property type="entry name" value="RIBOSOMALS17"/>
</dbReference>
<dbReference type="SUPFAM" id="SSF50249">
    <property type="entry name" value="Nucleic acid-binding proteins"/>
    <property type="match status" value="1"/>
</dbReference>
<organism>
    <name type="scientific">Pseudomonas syringae pv. syringae (strain B728a)</name>
    <dbReference type="NCBI Taxonomy" id="205918"/>
    <lineage>
        <taxon>Bacteria</taxon>
        <taxon>Pseudomonadati</taxon>
        <taxon>Pseudomonadota</taxon>
        <taxon>Gammaproteobacteria</taxon>
        <taxon>Pseudomonadales</taxon>
        <taxon>Pseudomonadaceae</taxon>
        <taxon>Pseudomonas</taxon>
        <taxon>Pseudomonas syringae</taxon>
    </lineage>
</organism>
<name>RS17_PSEU2</name>
<reference key="1">
    <citation type="journal article" date="2005" name="Proc. Natl. Acad. Sci. U.S.A.">
        <title>Comparison of the complete genome sequences of Pseudomonas syringae pv. syringae B728a and pv. tomato DC3000.</title>
        <authorList>
            <person name="Feil H."/>
            <person name="Feil W.S."/>
            <person name="Chain P."/>
            <person name="Larimer F."/>
            <person name="Dibartolo G."/>
            <person name="Copeland A."/>
            <person name="Lykidis A."/>
            <person name="Trong S."/>
            <person name="Nolan M."/>
            <person name="Goltsman E."/>
            <person name="Thiel J."/>
            <person name="Malfatti S."/>
            <person name="Loper J.E."/>
            <person name="Lapidus A."/>
            <person name="Detter J.C."/>
            <person name="Land M."/>
            <person name="Richardson P.M."/>
            <person name="Kyrpides N.C."/>
            <person name="Ivanova N."/>
            <person name="Lindow S.E."/>
        </authorList>
    </citation>
    <scope>NUCLEOTIDE SEQUENCE [LARGE SCALE GENOMIC DNA]</scope>
    <source>
        <strain>B728a</strain>
    </source>
</reference>
<proteinExistence type="inferred from homology"/>
<sequence length="88" mass="10097">MAEAEKTVRTLTGRVVSDKMDKTITVLIERRVKHPIYGKYVKRSTKLHAHDETNQCHIGDKVTIRETRPVAKTKSWALVDILERAVEV</sequence>
<evidence type="ECO:0000255" key="1">
    <source>
        <dbReference type="HAMAP-Rule" id="MF_01345"/>
    </source>
</evidence>
<evidence type="ECO:0000305" key="2"/>
<protein>
    <recommendedName>
        <fullName evidence="1">Small ribosomal subunit protein uS17</fullName>
    </recommendedName>
    <alternativeName>
        <fullName evidence="2">30S ribosomal protein S17</fullName>
    </alternativeName>
</protein>